<keyword id="KW-0010">Activator</keyword>
<keyword id="KW-0013">ADP-ribosylation</keyword>
<keyword id="KW-0090">Biological rhythms</keyword>
<keyword id="KW-0963">Cytoplasm</keyword>
<keyword id="KW-0238">DNA-binding</keyword>
<keyword id="KW-0539">Nucleus</keyword>
<keyword id="KW-1185">Reference proteome</keyword>
<keyword id="KW-0677">Repeat</keyword>
<keyword id="KW-0678">Repressor</keyword>
<keyword id="KW-0804">Transcription</keyword>
<keyword id="KW-0805">Transcription regulation</keyword>
<proteinExistence type="evidence at transcript level"/>
<dbReference type="EMBL" id="D38226">
    <property type="protein sequence ID" value="BAA19930.1"/>
    <property type="molecule type" value="mRNA"/>
</dbReference>
<dbReference type="RefSeq" id="NP_001075674.1">
    <property type="nucleotide sequence ID" value="NM_001082205.1"/>
</dbReference>
<dbReference type="SMR" id="O02747"/>
<dbReference type="FunCoup" id="O02747">
    <property type="interactions" value="114"/>
</dbReference>
<dbReference type="STRING" id="9986.ENSOCUP00000042767"/>
<dbReference type="BindingDB" id="O02747"/>
<dbReference type="ChEMBL" id="CHEMBL4725"/>
<dbReference type="PaxDb" id="9986-ENSOCUP00000003361"/>
<dbReference type="GeneID" id="100008995"/>
<dbReference type="KEGG" id="ocu:100008995"/>
<dbReference type="CTD" id="196"/>
<dbReference type="eggNOG" id="KOG3560">
    <property type="taxonomic scope" value="Eukaryota"/>
</dbReference>
<dbReference type="InParanoid" id="O02747"/>
<dbReference type="OrthoDB" id="6099906at2759"/>
<dbReference type="Proteomes" id="UP000001811">
    <property type="component" value="Unplaced"/>
</dbReference>
<dbReference type="GO" id="GO:0005737">
    <property type="term" value="C:cytoplasm"/>
    <property type="evidence" value="ECO:0000250"/>
    <property type="project" value="UniProtKB"/>
</dbReference>
<dbReference type="GO" id="GO:0034753">
    <property type="term" value="C:nuclear aryl hydrocarbon receptor complex"/>
    <property type="evidence" value="ECO:0000250"/>
    <property type="project" value="UniProtKB"/>
</dbReference>
<dbReference type="GO" id="GO:0005634">
    <property type="term" value="C:nucleus"/>
    <property type="evidence" value="ECO:0000250"/>
    <property type="project" value="UniProtKB"/>
</dbReference>
<dbReference type="GO" id="GO:0003700">
    <property type="term" value="F:DNA-binding transcription factor activity"/>
    <property type="evidence" value="ECO:0000250"/>
    <property type="project" value="UniProtKB"/>
</dbReference>
<dbReference type="GO" id="GO:0070888">
    <property type="term" value="F:E-box binding"/>
    <property type="evidence" value="ECO:0000250"/>
    <property type="project" value="UniProtKB"/>
</dbReference>
<dbReference type="GO" id="GO:0004879">
    <property type="term" value="F:nuclear receptor activity"/>
    <property type="evidence" value="ECO:0007669"/>
    <property type="project" value="TreeGrafter"/>
</dbReference>
<dbReference type="GO" id="GO:0046982">
    <property type="term" value="F:protein heterodimerization activity"/>
    <property type="evidence" value="ECO:0000250"/>
    <property type="project" value="UniProtKB"/>
</dbReference>
<dbReference type="GO" id="GO:0042803">
    <property type="term" value="F:protein homodimerization activity"/>
    <property type="evidence" value="ECO:0000250"/>
    <property type="project" value="UniProtKB"/>
</dbReference>
<dbReference type="GO" id="GO:1990837">
    <property type="term" value="F:sequence-specific double-stranded DNA binding"/>
    <property type="evidence" value="ECO:0000250"/>
    <property type="project" value="UniProtKB"/>
</dbReference>
<dbReference type="GO" id="GO:1904613">
    <property type="term" value="P:cellular response to 2,3,7,8-tetrachlorodibenzodioxine"/>
    <property type="evidence" value="ECO:0007669"/>
    <property type="project" value="UniProtKB-ARBA"/>
</dbReference>
<dbReference type="GO" id="GO:0032922">
    <property type="term" value="P:circadian regulation of gene expression"/>
    <property type="evidence" value="ECO:0000250"/>
    <property type="project" value="UniProtKB"/>
</dbReference>
<dbReference type="GO" id="GO:0045892">
    <property type="term" value="P:negative regulation of DNA-templated transcription"/>
    <property type="evidence" value="ECO:0000250"/>
    <property type="project" value="UniProtKB"/>
</dbReference>
<dbReference type="GO" id="GO:0002841">
    <property type="term" value="P:negative regulation of T cell mediated immune response to tumor cell"/>
    <property type="evidence" value="ECO:0000250"/>
    <property type="project" value="UniProtKB"/>
</dbReference>
<dbReference type="GO" id="GO:0045893">
    <property type="term" value="P:positive regulation of DNA-templated transcription"/>
    <property type="evidence" value="ECO:0000250"/>
    <property type="project" value="UniProtKB"/>
</dbReference>
<dbReference type="GO" id="GO:0045944">
    <property type="term" value="P:positive regulation of transcription by RNA polymerase II"/>
    <property type="evidence" value="ECO:0000250"/>
    <property type="project" value="UniProtKB"/>
</dbReference>
<dbReference type="GO" id="GO:0002819">
    <property type="term" value="P:regulation of adaptive immune response"/>
    <property type="evidence" value="ECO:0000250"/>
    <property type="project" value="UniProtKB"/>
</dbReference>
<dbReference type="GO" id="GO:0009410">
    <property type="term" value="P:response to xenobiotic stimulus"/>
    <property type="evidence" value="ECO:0000250"/>
    <property type="project" value="UniProtKB"/>
</dbReference>
<dbReference type="GO" id="GO:0006805">
    <property type="term" value="P:xenobiotic metabolic process"/>
    <property type="evidence" value="ECO:0007669"/>
    <property type="project" value="InterPro"/>
</dbReference>
<dbReference type="CDD" id="cd11436">
    <property type="entry name" value="bHLH-PAS_AhR"/>
    <property type="match status" value="1"/>
</dbReference>
<dbReference type="CDD" id="cd00130">
    <property type="entry name" value="PAS"/>
    <property type="match status" value="2"/>
</dbReference>
<dbReference type="FunFam" id="3.30.450.20:FF:000035">
    <property type="entry name" value="Aryl hydrocarbon receptor"/>
    <property type="match status" value="1"/>
</dbReference>
<dbReference type="FunFam" id="3.30.450.20:FF:000019">
    <property type="entry name" value="Aryl hydrocarbon receptor 1"/>
    <property type="match status" value="1"/>
</dbReference>
<dbReference type="FunFam" id="4.10.280.10:FF:000024">
    <property type="entry name" value="Aryl hydrocarbon receptor 2"/>
    <property type="match status" value="1"/>
</dbReference>
<dbReference type="Gene3D" id="4.10.280.10">
    <property type="entry name" value="Helix-loop-helix DNA-binding domain"/>
    <property type="match status" value="1"/>
</dbReference>
<dbReference type="Gene3D" id="3.30.450.20">
    <property type="entry name" value="PAS domain"/>
    <property type="match status" value="2"/>
</dbReference>
<dbReference type="InterPro" id="IPR039091">
    <property type="entry name" value="AHR/AHRR"/>
</dbReference>
<dbReference type="InterPro" id="IPR033348">
    <property type="entry name" value="AHR_bHLH"/>
</dbReference>
<dbReference type="InterPro" id="IPR011598">
    <property type="entry name" value="bHLH_dom"/>
</dbReference>
<dbReference type="InterPro" id="IPR036638">
    <property type="entry name" value="HLH_DNA-bd_sf"/>
</dbReference>
<dbReference type="InterPro" id="IPR001610">
    <property type="entry name" value="PAC"/>
</dbReference>
<dbReference type="InterPro" id="IPR000014">
    <property type="entry name" value="PAS"/>
</dbReference>
<dbReference type="InterPro" id="IPR035965">
    <property type="entry name" value="PAS-like_dom_sf"/>
</dbReference>
<dbReference type="InterPro" id="IPR013767">
    <property type="entry name" value="PAS_fold"/>
</dbReference>
<dbReference type="InterPro" id="IPR013655">
    <property type="entry name" value="PAS_fold_3"/>
</dbReference>
<dbReference type="PANTHER" id="PTHR10649">
    <property type="entry name" value="ARYL HYDROCARBON RECEPTOR"/>
    <property type="match status" value="1"/>
</dbReference>
<dbReference type="PANTHER" id="PTHR10649:SF9">
    <property type="entry name" value="ARYL HYDROCARBON RECEPTOR"/>
    <property type="match status" value="1"/>
</dbReference>
<dbReference type="Pfam" id="PF00010">
    <property type="entry name" value="HLH"/>
    <property type="match status" value="1"/>
</dbReference>
<dbReference type="Pfam" id="PF00989">
    <property type="entry name" value="PAS"/>
    <property type="match status" value="1"/>
</dbReference>
<dbReference type="Pfam" id="PF08447">
    <property type="entry name" value="PAS_3"/>
    <property type="match status" value="1"/>
</dbReference>
<dbReference type="SMART" id="SM00353">
    <property type="entry name" value="HLH"/>
    <property type="match status" value="1"/>
</dbReference>
<dbReference type="SMART" id="SM00086">
    <property type="entry name" value="PAC"/>
    <property type="match status" value="1"/>
</dbReference>
<dbReference type="SMART" id="SM00091">
    <property type="entry name" value="PAS"/>
    <property type="match status" value="2"/>
</dbReference>
<dbReference type="SUPFAM" id="SSF47459">
    <property type="entry name" value="HLH, helix-loop-helix DNA-binding domain"/>
    <property type="match status" value="1"/>
</dbReference>
<dbReference type="SUPFAM" id="SSF55785">
    <property type="entry name" value="PYP-like sensor domain (PAS domain)"/>
    <property type="match status" value="2"/>
</dbReference>
<dbReference type="PROSITE" id="PS50888">
    <property type="entry name" value="BHLH"/>
    <property type="match status" value="1"/>
</dbReference>
<dbReference type="PROSITE" id="PS50112">
    <property type="entry name" value="PAS"/>
    <property type="match status" value="1"/>
</dbReference>
<name>AHR_RABIT</name>
<protein>
    <recommendedName>
        <fullName>Aryl hydrocarbon receptor</fullName>
        <shortName>Ah receptor</shortName>
        <shortName>AhR</shortName>
    </recommendedName>
</protein>
<organism>
    <name type="scientific">Oryctolagus cuniculus</name>
    <name type="common">Rabbit</name>
    <dbReference type="NCBI Taxonomy" id="9986"/>
    <lineage>
        <taxon>Eukaryota</taxon>
        <taxon>Metazoa</taxon>
        <taxon>Chordata</taxon>
        <taxon>Craniata</taxon>
        <taxon>Vertebrata</taxon>
        <taxon>Euteleostomi</taxon>
        <taxon>Mammalia</taxon>
        <taxon>Eutheria</taxon>
        <taxon>Euarchontoglires</taxon>
        <taxon>Glires</taxon>
        <taxon>Lagomorpha</taxon>
        <taxon>Leporidae</taxon>
        <taxon>Oryctolagus</taxon>
    </lineage>
</organism>
<evidence type="ECO:0000250" key="1">
    <source>
        <dbReference type="UniProtKB" id="P30561"/>
    </source>
</evidence>
<evidence type="ECO:0000250" key="2">
    <source>
        <dbReference type="UniProtKB" id="P35869"/>
    </source>
</evidence>
<evidence type="ECO:0000255" key="3">
    <source>
        <dbReference type="PROSITE-ProRule" id="PRU00140"/>
    </source>
</evidence>
<evidence type="ECO:0000255" key="4">
    <source>
        <dbReference type="PROSITE-ProRule" id="PRU00981"/>
    </source>
</evidence>
<evidence type="ECO:0000256" key="5">
    <source>
        <dbReference type="SAM" id="MobiDB-lite"/>
    </source>
</evidence>
<evidence type="ECO:0000269" key="6">
    <source>
    </source>
</evidence>
<comment type="function">
    <text evidence="2 6">Ligand-activated transcription factor that enables cells to adapt to changing conditions by sensing compounds from the environment, diet, microbiome and cellular metabolism, and which plays important roles in development, immunity and cancer (PubMed:9022676). Upon ligand binding, translocates into the nucleus, where it heterodimerizes with ARNT and induces transcription by binding to xenobiotic response elements (XRE). Regulates a variety of biological processes, including angiogenesis, hematopoiesis, drug and lipid metabolism, cell motility and immune modulation. Xenobiotics can act as ligands: upon xenobiotic-binding, activates the expression of multiple phase I and II xenobiotic chemical metabolizing enzyme genes (such as the CYP1A1 gene). Mediates biochemical and toxic effects of halogenated aromatic hydrocarbons. Next to xenobiotics, natural ligands derived from plants, microbiota, and endogenous metabolism are potent AHR agonists. Tryptophan (Trp) derivatives constitute an important class of endogenous AHR ligands. Acts as a negative regulator of anti-tumor immunity: indoles and kynurenic acid generated by Trp catabolism act as ligand and activate AHR, thereby promoting AHR-driven cancer cell motility and suppressing adaptive immunity. Regulates the circadian clock by inhibiting the basal and circadian expression of the core circadian component PER1. Inhibits PER1 by repressing the CLOCK-BMAL1 heterodimer mediated transcriptional activation of PER1. The heterodimer ARNT:AHR binds to core DNA sequence 5'-TGCGTG-3' within the dioxin response element (DRE) of target gene promoters and activates their transcription (By similarity).</text>
</comment>
<comment type="subunit">
    <text evidence="1 2">Homodimer (By similarity). Heterodimer; efficient DNA binding requires dimerization with another bHLH protein (By similarity). Binds MYBBP1A (By similarity). Interacts with coactivators including SRC-1, RIP140 and NOCA7, and with the corepressor SMRT. Interacts with NEDD8 and IVNS1ABP (By similarity). Interacts with BMAL1. Interacts with HSP90AB1 (By similarity). Interacts with ARNT; the heterodimer ARNT:AHR binds to core DNA sequence 5'-TGCGTG-3' within the dioxin response element (DRE) of target gene promoters and activates their transcription. Interacts with TIPARP; leading to mono-ADP-ribosylation of AHR and subsequent inhibition of AHR (By similarity).</text>
</comment>
<comment type="subcellular location">
    <subcellularLocation>
        <location evidence="1">Cytoplasm</location>
    </subcellularLocation>
    <subcellularLocation>
        <location evidence="1">Nucleus</location>
    </subcellularLocation>
    <text evidence="1">Initially cytoplasmic; upon binding with ligand and interaction with a HSP90, it translocates to the nucleus.</text>
</comment>
<comment type="domain">
    <text evidence="1">The PAS 1 domain is essential for dimerization and also required for AHR:ARNT heterodimerization.</text>
</comment>
<comment type="PTM">
    <text evidence="2">Mono-ADP-ribosylated, leading to inhibit transcription activator activity of AHR.</text>
</comment>
<reference key="1">
    <citation type="journal article" date="1996" name="Eur. J. Biochem.">
        <title>Expression of aryl hydrocarbon receptor (AhR) and aryl hydrocarbon receptor nuclear translocator (Arnt) in adult rabbits known to be non-responsive to cytochrome P-450 1A1 (CYP1A1) inducers.</title>
        <authorList>
            <person name="Takahashi Y."/>
            <person name="Nakayama K."/>
            <person name="Shimojima T."/>
            <person name="Itoh S."/>
            <person name="Kamataki T."/>
        </authorList>
    </citation>
    <scope>NUCLEOTIDE SEQUENCE [MRNA]</scope>
    <scope>FUNCTION</scope>
    <source>
        <strain>New Zealand white</strain>
        <tissue>Liver</tissue>
    </source>
</reference>
<gene>
    <name type="primary">AHR</name>
</gene>
<accession>O02747</accession>
<sequence>MNGGGANITYASRKRRKPVQKTVKPIPAEGIKSNPSKRHRDRLNTELDRLASLLPFPQDVINKLDKLSVLRLSVSYLRAKSFFDVALKSSSADRNGGQDPCRAKFGEGLNLQEGEFLLQALNGFVLVVTVDALVFYASSTIQDYLGFQQSDVIHQSVYELIHTEDRAEFQRQLHWALNPSQCTDPGQGADETHGLPQPVYYNPDQLPPENSSFMERCFICRLRCLLDNSSGFLAMNFQGRLKFLHGQNKKGKDGSLLPPQLALFAIATPLQPPSILEIRTKNFIFRTKHKLDFTPTGCDAKGQIVLGYTEAELCMRGSGYQFIHAADMLYCAESHIRMIKTGESGLAVFRLLTKDNRWAWVQSNARFIYKNGRPDFIIATQRPLTDEEGREHLLKRNTKLPFMFTTGEAVLYEMTSPFPPIMDPLPIRPKSGTCGKDSATKPTPSKDSVHPSSLLSALMQQDESIYLYPPSSNAPFERNFFTESLNECSNWPENVASVAGGSVLKHEQIGQSQEVSPAFSGDQTVLFPDNKNCDLYNIMKNLGVDFEDIKNMQNEEFFGADFSGEVDFRDIDITDEILTYVQDSLNKSPFGSPGYQPQPATALNSSCMVQERLQLGPPQQPPCRSEQATVEPQQQLCQKMEHMQVNSMFANWSANQPVPFSEPQQDLQPYSVFTDFHTADQAFPYTAAMNTMPYTQNFTPCNQTVAPQHSRCTQLDFAMGNFDSSPYPSTSNLEDFVTCLQVPDRQTHGGNPQSAMVAPQTCYAGAVSMYQCQPGPAHTLMGQMQCEPPVPGPEAFLNKFPNGGMLNETYPADLHDINNTVASTHLPPLHHPSEARPFPDLASGRLL</sequence>
<feature type="chain" id="PRO_0000127116" description="Aryl hydrocarbon receptor">
    <location>
        <begin position="1"/>
        <end position="847"/>
    </location>
</feature>
<feature type="domain" description="bHLH" evidence="4">
    <location>
        <begin position="27"/>
        <end position="80"/>
    </location>
</feature>
<feature type="domain" description="PAS 1" evidence="3">
    <location>
        <begin position="120"/>
        <end position="173"/>
    </location>
</feature>
<feature type="domain" description="PAS 2" evidence="3">
    <location>
        <begin position="281"/>
        <end position="336"/>
    </location>
</feature>
<feature type="domain" description="PAC">
    <location>
        <begin position="346"/>
        <end position="384"/>
    </location>
</feature>
<feature type="region of interest" description="Disordered" evidence="5">
    <location>
        <begin position="1"/>
        <end position="39"/>
    </location>
</feature>
<feature type="region of interest" description="DNA-binding" evidence="2">
    <location>
        <begin position="38"/>
        <end position="66"/>
    </location>
</feature>
<feature type="region of interest" description="Required for maintaining the overall integrity of the AHR:ARNT heterodimer and its transcriptional activity" evidence="2">
    <location>
        <begin position="50"/>
        <end position="82"/>
    </location>
</feature>
<feature type="region of interest" description="Required for maintaining the overall integrity of the AHR:ARNT heterodimer and its transcriptional activity" evidence="1">
    <location>
        <begin position="117"/>
        <end position="125"/>
    </location>
</feature>
<feature type="region of interest" description="Required for maintaining the overall integrity of the AHR:ARNT heterodimer and its transcriptional activity" evidence="1">
    <location>
        <begin position="264"/>
        <end position="266"/>
    </location>
</feature>
<feature type="region of interest" description="Disordered" evidence="5">
    <location>
        <begin position="430"/>
        <end position="452"/>
    </location>
</feature>
<feature type="region of interest" description="Disordered" evidence="5">
    <location>
        <begin position="825"/>
        <end position="847"/>
    </location>
</feature>
<feature type="short sequence motif" description="Nuclear localization signal 1" evidence="2">
    <location>
        <begin position="13"/>
        <end position="16"/>
    </location>
</feature>
<feature type="short sequence motif" description="Nuclear localization signal 2" evidence="2">
    <location>
        <begin position="37"/>
        <end position="42"/>
    </location>
</feature>
<feature type="short sequence motif" description="Nuclear export signal" evidence="2">
    <location>
        <begin position="64"/>
        <end position="72"/>
    </location>
</feature>
<feature type="compositionally biased region" description="Polar residues" evidence="5">
    <location>
        <begin position="440"/>
        <end position="452"/>
    </location>
</feature>